<keyword id="KW-0143">Chaperone</keyword>
<keyword id="KW-0963">Cytoplasm</keyword>
<keyword id="KW-0235">DNA replication</keyword>
<keyword id="KW-0479">Metal-binding</keyword>
<keyword id="KW-1185">Reference proteome</keyword>
<keyword id="KW-0677">Repeat</keyword>
<keyword id="KW-0346">Stress response</keyword>
<keyword id="KW-0862">Zinc</keyword>
<keyword id="KW-0863">Zinc-finger</keyword>
<accession>Q2S030</accession>
<evidence type="ECO:0000255" key="1">
    <source>
        <dbReference type="HAMAP-Rule" id="MF_01152"/>
    </source>
</evidence>
<evidence type="ECO:0000256" key="2">
    <source>
        <dbReference type="SAM" id="MobiDB-lite"/>
    </source>
</evidence>
<gene>
    <name evidence="1" type="primary">dnaJ</name>
    <name type="ordered locus">SRU_2351</name>
</gene>
<comment type="function">
    <text evidence="1">Participates actively in the response to hyperosmotic and heat shock by preventing the aggregation of stress-denatured proteins and by disaggregating proteins, also in an autonomous, DnaK-independent fashion. Unfolded proteins bind initially to DnaJ; upon interaction with the DnaJ-bound protein, DnaK hydrolyzes its bound ATP, resulting in the formation of a stable complex. GrpE releases ADP from DnaK; ATP binding to DnaK triggers the release of the substrate protein, thus completing the reaction cycle. Several rounds of ATP-dependent interactions between DnaJ, DnaK and GrpE are required for fully efficient folding. Also involved, together with DnaK and GrpE, in the DNA replication of plasmids through activation of initiation proteins.</text>
</comment>
<comment type="cofactor">
    <cofactor evidence="1">
        <name>Zn(2+)</name>
        <dbReference type="ChEBI" id="CHEBI:29105"/>
    </cofactor>
    <text evidence="1">Binds 2 Zn(2+) ions per monomer.</text>
</comment>
<comment type="subunit">
    <text evidence="1">Homodimer.</text>
</comment>
<comment type="subcellular location">
    <subcellularLocation>
        <location evidence="1">Cytoplasm</location>
    </subcellularLocation>
</comment>
<comment type="domain">
    <text evidence="1">The J domain is necessary and sufficient to stimulate DnaK ATPase activity. Zinc center 1 plays an important role in the autonomous, DnaK-independent chaperone activity of DnaJ. Zinc center 2 is essential for interaction with DnaK and for DnaJ activity.</text>
</comment>
<comment type="similarity">
    <text evidence="1">Belongs to the DnaJ family.</text>
</comment>
<reference key="1">
    <citation type="journal article" date="2005" name="Proc. Natl. Acad. Sci. U.S.A.">
        <title>The genome of Salinibacter ruber: convergence and gene exchange among hyperhalophilic bacteria and archaea.</title>
        <authorList>
            <person name="Mongodin E.F."/>
            <person name="Nelson K.E."/>
            <person name="Daugherty S."/>
            <person name="DeBoy R.T."/>
            <person name="Wister J."/>
            <person name="Khouri H."/>
            <person name="Weidman J."/>
            <person name="Walsh D.A."/>
            <person name="Papke R.T."/>
            <person name="Sanchez Perez G."/>
            <person name="Sharma A.K."/>
            <person name="Nesbo C.L."/>
            <person name="MacLeod D."/>
            <person name="Bapteste E."/>
            <person name="Doolittle W.F."/>
            <person name="Charlebois R.L."/>
            <person name="Legault B."/>
            <person name="Rodriguez-Valera F."/>
        </authorList>
    </citation>
    <scope>NUCLEOTIDE SEQUENCE [LARGE SCALE GENOMIC DNA]</scope>
    <source>
        <strain>DSM 13855 / CECT 5946 / M31</strain>
    </source>
</reference>
<name>DNAJ_SALRD</name>
<protein>
    <recommendedName>
        <fullName evidence="1">Chaperone protein DnaJ</fullName>
    </recommendedName>
</protein>
<dbReference type="EMBL" id="CP000159">
    <property type="protein sequence ID" value="ABC46054.1"/>
    <property type="molecule type" value="Genomic_DNA"/>
</dbReference>
<dbReference type="RefSeq" id="WP_011405069.1">
    <property type="nucleotide sequence ID" value="NC_007677.1"/>
</dbReference>
<dbReference type="RefSeq" id="YP_446451.1">
    <property type="nucleotide sequence ID" value="NC_007677.1"/>
</dbReference>
<dbReference type="SMR" id="Q2S030"/>
<dbReference type="STRING" id="309807.SRU_2351"/>
<dbReference type="EnsemblBacteria" id="ABC46054">
    <property type="protein sequence ID" value="ABC46054"/>
    <property type="gene ID" value="SRU_2351"/>
</dbReference>
<dbReference type="KEGG" id="sru:SRU_2351"/>
<dbReference type="PATRIC" id="fig|309807.25.peg.2447"/>
<dbReference type="eggNOG" id="COG0484">
    <property type="taxonomic scope" value="Bacteria"/>
</dbReference>
<dbReference type="HOGENOM" id="CLU_017633_0_7_10"/>
<dbReference type="OrthoDB" id="9779889at2"/>
<dbReference type="Proteomes" id="UP000008674">
    <property type="component" value="Chromosome"/>
</dbReference>
<dbReference type="GO" id="GO:0005737">
    <property type="term" value="C:cytoplasm"/>
    <property type="evidence" value="ECO:0007669"/>
    <property type="project" value="UniProtKB-SubCell"/>
</dbReference>
<dbReference type="GO" id="GO:0005524">
    <property type="term" value="F:ATP binding"/>
    <property type="evidence" value="ECO:0007669"/>
    <property type="project" value="InterPro"/>
</dbReference>
<dbReference type="GO" id="GO:0031072">
    <property type="term" value="F:heat shock protein binding"/>
    <property type="evidence" value="ECO:0007669"/>
    <property type="project" value="InterPro"/>
</dbReference>
<dbReference type="GO" id="GO:0051082">
    <property type="term" value="F:unfolded protein binding"/>
    <property type="evidence" value="ECO:0007669"/>
    <property type="project" value="UniProtKB-UniRule"/>
</dbReference>
<dbReference type="GO" id="GO:0008270">
    <property type="term" value="F:zinc ion binding"/>
    <property type="evidence" value="ECO:0007669"/>
    <property type="project" value="UniProtKB-UniRule"/>
</dbReference>
<dbReference type="GO" id="GO:0051085">
    <property type="term" value="P:chaperone cofactor-dependent protein refolding"/>
    <property type="evidence" value="ECO:0007669"/>
    <property type="project" value="TreeGrafter"/>
</dbReference>
<dbReference type="GO" id="GO:0006260">
    <property type="term" value="P:DNA replication"/>
    <property type="evidence" value="ECO:0007669"/>
    <property type="project" value="UniProtKB-KW"/>
</dbReference>
<dbReference type="GO" id="GO:0042026">
    <property type="term" value="P:protein refolding"/>
    <property type="evidence" value="ECO:0007669"/>
    <property type="project" value="TreeGrafter"/>
</dbReference>
<dbReference type="GO" id="GO:0009408">
    <property type="term" value="P:response to heat"/>
    <property type="evidence" value="ECO:0007669"/>
    <property type="project" value="InterPro"/>
</dbReference>
<dbReference type="CDD" id="cd06257">
    <property type="entry name" value="DnaJ"/>
    <property type="match status" value="1"/>
</dbReference>
<dbReference type="CDD" id="cd10747">
    <property type="entry name" value="DnaJ_C"/>
    <property type="match status" value="1"/>
</dbReference>
<dbReference type="CDD" id="cd10719">
    <property type="entry name" value="DnaJ_zf"/>
    <property type="match status" value="1"/>
</dbReference>
<dbReference type="FunFam" id="1.10.287.110:FF:000034">
    <property type="entry name" value="Chaperone protein DnaJ"/>
    <property type="match status" value="1"/>
</dbReference>
<dbReference type="FunFam" id="2.60.260.20:FF:000005">
    <property type="entry name" value="Chaperone protein dnaJ 1, mitochondrial"/>
    <property type="match status" value="1"/>
</dbReference>
<dbReference type="FunFam" id="2.10.230.10:FF:000002">
    <property type="entry name" value="Molecular chaperone DnaJ"/>
    <property type="match status" value="1"/>
</dbReference>
<dbReference type="Gene3D" id="1.10.287.110">
    <property type="entry name" value="DnaJ domain"/>
    <property type="match status" value="1"/>
</dbReference>
<dbReference type="Gene3D" id="2.10.230.10">
    <property type="entry name" value="Heat shock protein DnaJ, cysteine-rich domain"/>
    <property type="match status" value="1"/>
</dbReference>
<dbReference type="Gene3D" id="2.60.260.20">
    <property type="entry name" value="Urease metallochaperone UreE, N-terminal domain"/>
    <property type="match status" value="2"/>
</dbReference>
<dbReference type="HAMAP" id="MF_01152">
    <property type="entry name" value="DnaJ"/>
    <property type="match status" value="1"/>
</dbReference>
<dbReference type="InterPro" id="IPR012724">
    <property type="entry name" value="DnaJ"/>
</dbReference>
<dbReference type="InterPro" id="IPR002939">
    <property type="entry name" value="DnaJ_C"/>
</dbReference>
<dbReference type="InterPro" id="IPR001623">
    <property type="entry name" value="DnaJ_domain"/>
</dbReference>
<dbReference type="InterPro" id="IPR018253">
    <property type="entry name" value="DnaJ_domain_CS"/>
</dbReference>
<dbReference type="InterPro" id="IPR008971">
    <property type="entry name" value="HSP40/DnaJ_pept-bd"/>
</dbReference>
<dbReference type="InterPro" id="IPR001305">
    <property type="entry name" value="HSP_DnaJ_Cys-rich_dom"/>
</dbReference>
<dbReference type="InterPro" id="IPR036410">
    <property type="entry name" value="HSP_DnaJ_Cys-rich_dom_sf"/>
</dbReference>
<dbReference type="InterPro" id="IPR036869">
    <property type="entry name" value="J_dom_sf"/>
</dbReference>
<dbReference type="NCBIfam" id="TIGR02349">
    <property type="entry name" value="DnaJ_bact"/>
    <property type="match status" value="1"/>
</dbReference>
<dbReference type="NCBIfam" id="NF008035">
    <property type="entry name" value="PRK10767.1"/>
    <property type="match status" value="1"/>
</dbReference>
<dbReference type="PANTHER" id="PTHR43096:SF48">
    <property type="entry name" value="CHAPERONE PROTEIN DNAJ"/>
    <property type="match status" value="1"/>
</dbReference>
<dbReference type="PANTHER" id="PTHR43096">
    <property type="entry name" value="DNAJ HOMOLOG 1, MITOCHONDRIAL-RELATED"/>
    <property type="match status" value="1"/>
</dbReference>
<dbReference type="Pfam" id="PF00226">
    <property type="entry name" value="DnaJ"/>
    <property type="match status" value="1"/>
</dbReference>
<dbReference type="Pfam" id="PF01556">
    <property type="entry name" value="DnaJ_C"/>
    <property type="match status" value="1"/>
</dbReference>
<dbReference type="Pfam" id="PF00684">
    <property type="entry name" value="DnaJ_CXXCXGXG"/>
    <property type="match status" value="1"/>
</dbReference>
<dbReference type="PRINTS" id="PR00625">
    <property type="entry name" value="JDOMAIN"/>
</dbReference>
<dbReference type="SMART" id="SM00271">
    <property type="entry name" value="DnaJ"/>
    <property type="match status" value="1"/>
</dbReference>
<dbReference type="SUPFAM" id="SSF46565">
    <property type="entry name" value="Chaperone J-domain"/>
    <property type="match status" value="1"/>
</dbReference>
<dbReference type="SUPFAM" id="SSF57938">
    <property type="entry name" value="DnaJ/Hsp40 cysteine-rich domain"/>
    <property type="match status" value="1"/>
</dbReference>
<dbReference type="SUPFAM" id="SSF49493">
    <property type="entry name" value="HSP40/DnaJ peptide-binding domain"/>
    <property type="match status" value="2"/>
</dbReference>
<dbReference type="PROSITE" id="PS00636">
    <property type="entry name" value="DNAJ_1"/>
    <property type="match status" value="1"/>
</dbReference>
<dbReference type="PROSITE" id="PS50076">
    <property type="entry name" value="DNAJ_2"/>
    <property type="match status" value="1"/>
</dbReference>
<dbReference type="PROSITE" id="PS51188">
    <property type="entry name" value="ZF_CR"/>
    <property type="match status" value="1"/>
</dbReference>
<feature type="chain" id="PRO_1000085284" description="Chaperone protein DnaJ">
    <location>
        <begin position="1"/>
        <end position="388"/>
    </location>
</feature>
<feature type="domain" description="J" evidence="1">
    <location>
        <begin position="4"/>
        <end position="69"/>
    </location>
</feature>
<feature type="repeat" description="CXXCXGXG motif">
    <location>
        <begin position="153"/>
        <end position="160"/>
    </location>
</feature>
<feature type="repeat" description="CXXCXGXG motif">
    <location>
        <begin position="173"/>
        <end position="180"/>
    </location>
</feature>
<feature type="repeat" description="CXXCXGXG motif">
    <location>
        <begin position="199"/>
        <end position="206"/>
    </location>
</feature>
<feature type="repeat" description="CXXCXGXG motif">
    <location>
        <begin position="213"/>
        <end position="220"/>
    </location>
</feature>
<feature type="zinc finger region" description="CR-type" evidence="1">
    <location>
        <begin position="140"/>
        <end position="225"/>
    </location>
</feature>
<feature type="region of interest" description="Disordered" evidence="2">
    <location>
        <begin position="27"/>
        <end position="86"/>
    </location>
</feature>
<feature type="region of interest" description="Disordered" evidence="2">
    <location>
        <begin position="99"/>
        <end position="125"/>
    </location>
</feature>
<feature type="region of interest" description="Disordered" evidence="2">
    <location>
        <begin position="362"/>
        <end position="388"/>
    </location>
</feature>
<feature type="compositionally biased region" description="Basic and acidic residues" evidence="2">
    <location>
        <begin position="27"/>
        <end position="50"/>
    </location>
</feature>
<feature type="compositionally biased region" description="Basic and acidic residues" evidence="2">
    <location>
        <begin position="58"/>
        <end position="73"/>
    </location>
</feature>
<feature type="compositionally biased region" description="Basic and acidic residues" evidence="2">
    <location>
        <begin position="113"/>
        <end position="124"/>
    </location>
</feature>
<feature type="compositionally biased region" description="Basic and acidic residues" evidence="2">
    <location>
        <begin position="362"/>
        <end position="376"/>
    </location>
</feature>
<feature type="binding site" evidence="1">
    <location>
        <position position="153"/>
    </location>
    <ligand>
        <name>Zn(2+)</name>
        <dbReference type="ChEBI" id="CHEBI:29105"/>
        <label>1</label>
    </ligand>
</feature>
<feature type="binding site" evidence="1">
    <location>
        <position position="156"/>
    </location>
    <ligand>
        <name>Zn(2+)</name>
        <dbReference type="ChEBI" id="CHEBI:29105"/>
        <label>1</label>
    </ligand>
</feature>
<feature type="binding site" evidence="1">
    <location>
        <position position="173"/>
    </location>
    <ligand>
        <name>Zn(2+)</name>
        <dbReference type="ChEBI" id="CHEBI:29105"/>
        <label>2</label>
    </ligand>
</feature>
<feature type="binding site" evidence="1">
    <location>
        <position position="176"/>
    </location>
    <ligand>
        <name>Zn(2+)</name>
        <dbReference type="ChEBI" id="CHEBI:29105"/>
        <label>2</label>
    </ligand>
</feature>
<feature type="binding site" evidence="1">
    <location>
        <position position="199"/>
    </location>
    <ligand>
        <name>Zn(2+)</name>
        <dbReference type="ChEBI" id="CHEBI:29105"/>
        <label>2</label>
    </ligand>
</feature>
<feature type="binding site" evidence="1">
    <location>
        <position position="202"/>
    </location>
    <ligand>
        <name>Zn(2+)</name>
        <dbReference type="ChEBI" id="CHEBI:29105"/>
        <label>2</label>
    </ligand>
</feature>
<feature type="binding site" evidence="1">
    <location>
        <position position="213"/>
    </location>
    <ligand>
        <name>Zn(2+)</name>
        <dbReference type="ChEBI" id="CHEBI:29105"/>
        <label>1</label>
    </ligand>
</feature>
<feature type="binding site" evidence="1">
    <location>
        <position position="216"/>
    </location>
    <ligand>
        <name>Zn(2+)</name>
        <dbReference type="ChEBI" id="CHEBI:29105"/>
        <label>1</label>
    </ligand>
</feature>
<proteinExistence type="inferred from homology"/>
<sequence>MPRDYYDILGVDEDASDKEIKKAYRKKAMEYHPDRNPDDPEAEQKFKEASEAYEVLSDPEKRQRYDQFGHDGVDSGAGGGRRGRGRGFHDIEDIFDAFSDIFGGAPGGGRGRGRSERGRGRPGSDLRVSLSLTLEEIAEGTEKNLRLQKYLECESCDGTGAEGGMGGQNFSMCPKCDGTGEIRQVSRSVFGQVVNVQPCPRCEGEGRIIDNLCDDCGGEGRVQGEESISINVPPGVMEGNYLTLGDAGNAGLRGGPSGDLRIEIEEEPHEHFERDGLDIYYDLHLSFPEAALGTEVDVPTLEGEARLEVDPGVQAGKILRMRDRGLPDLEGSGQGDQMIRVHVWTPQELTAEEEELLDQLRAHDNFQPRPPEEDTQKSFFRRVSDVFS</sequence>
<organism>
    <name type="scientific">Salinibacter ruber (strain DSM 13855 / M31)</name>
    <dbReference type="NCBI Taxonomy" id="309807"/>
    <lineage>
        <taxon>Bacteria</taxon>
        <taxon>Pseudomonadati</taxon>
        <taxon>Rhodothermota</taxon>
        <taxon>Rhodothermia</taxon>
        <taxon>Rhodothermales</taxon>
        <taxon>Salinibacteraceae</taxon>
        <taxon>Salinibacter</taxon>
    </lineage>
</organism>